<evidence type="ECO:0000250" key="1"/>
<evidence type="ECO:0000255" key="2"/>
<evidence type="ECO:0000269" key="3">
    <source>
    </source>
</evidence>
<evidence type="ECO:0000305" key="4"/>
<comment type="function">
    <text evidence="3">Pectinolytic enzymes consist of four classes of enzymes: pectin lyase, polygalacturonase, pectin methylesterase and rhamnogalacturonase. Among pectinolytic enzymes, pectin lyase is the most important in depolymerization of pectin, since it cleaves internal glycosidic bonds of highly methylated pectins.</text>
</comment>
<comment type="catalytic activity">
    <reaction>
        <text>Eliminative cleavage of (1-&gt;4)-alpha-D-galacturonan methyl ester to give oligosaccharides with 4-deoxy-6-O-methyl-alpha-D-galact-4-enuronosyl groups at their non-reducing ends.</text>
        <dbReference type="EC" id="4.2.2.10"/>
    </reaction>
</comment>
<comment type="biophysicochemical properties">
    <phDependence>
        <text evidence="3">Optimum pH is 7.0.</text>
    </phDependence>
</comment>
<comment type="subcellular location">
    <subcellularLocation>
        <location evidence="4">Secreted</location>
    </subcellularLocation>
</comment>
<comment type="similarity">
    <text evidence="4">Belongs to the polysaccharide lyase 1 family.</text>
</comment>
<comment type="sequence caution" evidence="4">
    <conflict type="erroneous gene model prediction">
        <sequence resource="EMBL-CDS" id="CBF86622"/>
    </conflict>
</comment>
<comment type="sequence caution" evidence="4">
    <conflict type="erroneous gene model prediction">
        <sequence resource="EMBL-CDS" id="EAA64442"/>
    </conflict>
</comment>
<keyword id="KW-0119">Carbohydrate metabolism</keyword>
<keyword id="KW-0961">Cell wall biogenesis/degradation</keyword>
<keyword id="KW-1015">Disulfide bond</keyword>
<keyword id="KW-0456">Lyase</keyword>
<keyword id="KW-0624">Polysaccharide degradation</keyword>
<keyword id="KW-1185">Reference proteome</keyword>
<keyword id="KW-0964">Secreted</keyword>
<keyword id="KW-0732">Signal</keyword>
<accession>Q5BAU9</accession>
<accession>C8VND0</accession>
<accession>Q1HFU6</accession>
<reference key="1">
    <citation type="journal article" date="2006" name="Proc. Natl. Acad. Sci. U.S.A.">
        <title>Development and application of a suite of polysaccharide-degrading enzymes for analyzing plant cell walls.</title>
        <authorList>
            <person name="Bauer S."/>
            <person name="Vasu P."/>
            <person name="Persson S."/>
            <person name="Mort A.J."/>
            <person name="Somerville C.R."/>
        </authorList>
    </citation>
    <scope>NUCLEOTIDE SEQUENCE [MRNA]</scope>
    <scope>FUNCTION</scope>
    <scope>BIOPHYSICOCHEMICAL PROPERTIES</scope>
    <source>
        <strain>FGSC A4 / ATCC 38163 / CBS 112.46 / NRRL 194 / M139</strain>
    </source>
</reference>
<reference key="2">
    <citation type="journal article" date="2005" name="Nature">
        <title>Sequencing of Aspergillus nidulans and comparative analysis with A. fumigatus and A. oryzae.</title>
        <authorList>
            <person name="Galagan J.E."/>
            <person name="Calvo S.E."/>
            <person name="Cuomo C."/>
            <person name="Ma L.-J."/>
            <person name="Wortman J.R."/>
            <person name="Batzoglou S."/>
            <person name="Lee S.-I."/>
            <person name="Bastuerkmen M."/>
            <person name="Spevak C.C."/>
            <person name="Clutterbuck J."/>
            <person name="Kapitonov V."/>
            <person name="Jurka J."/>
            <person name="Scazzocchio C."/>
            <person name="Farman M.L."/>
            <person name="Butler J."/>
            <person name="Purcell S."/>
            <person name="Harris S."/>
            <person name="Braus G.H."/>
            <person name="Draht O."/>
            <person name="Busch S."/>
            <person name="D'Enfert C."/>
            <person name="Bouchier C."/>
            <person name="Goldman G.H."/>
            <person name="Bell-Pedersen D."/>
            <person name="Griffiths-Jones S."/>
            <person name="Doonan J.H."/>
            <person name="Yu J."/>
            <person name="Vienken K."/>
            <person name="Pain A."/>
            <person name="Freitag M."/>
            <person name="Selker E.U."/>
            <person name="Archer D.B."/>
            <person name="Penalva M.A."/>
            <person name="Oakley B.R."/>
            <person name="Momany M."/>
            <person name="Tanaka T."/>
            <person name="Kumagai T."/>
            <person name="Asai K."/>
            <person name="Machida M."/>
            <person name="Nierman W.C."/>
            <person name="Denning D.W."/>
            <person name="Caddick M.X."/>
            <person name="Hynes M."/>
            <person name="Paoletti M."/>
            <person name="Fischer R."/>
            <person name="Miller B.L."/>
            <person name="Dyer P.S."/>
            <person name="Sachs M.S."/>
            <person name="Osmani S.A."/>
            <person name="Birren B.W."/>
        </authorList>
    </citation>
    <scope>NUCLEOTIDE SEQUENCE [LARGE SCALE GENOMIC DNA]</scope>
    <source>
        <strain>FGSC A4 / ATCC 38163 / CBS 112.46 / NRRL 194 / M139</strain>
    </source>
</reference>
<reference key="3">
    <citation type="journal article" date="2009" name="Fungal Genet. Biol.">
        <title>The 2008 update of the Aspergillus nidulans genome annotation: a community effort.</title>
        <authorList>
            <person name="Wortman J.R."/>
            <person name="Gilsenan J.M."/>
            <person name="Joardar V."/>
            <person name="Deegan J."/>
            <person name="Clutterbuck J."/>
            <person name="Andersen M.R."/>
            <person name="Archer D."/>
            <person name="Bencina M."/>
            <person name="Braus G."/>
            <person name="Coutinho P."/>
            <person name="von Dohren H."/>
            <person name="Doonan J."/>
            <person name="Driessen A.J."/>
            <person name="Durek P."/>
            <person name="Espeso E."/>
            <person name="Fekete E."/>
            <person name="Flipphi M."/>
            <person name="Estrada C.G."/>
            <person name="Geysens S."/>
            <person name="Goldman G."/>
            <person name="de Groot P.W."/>
            <person name="Hansen K."/>
            <person name="Harris S.D."/>
            <person name="Heinekamp T."/>
            <person name="Helmstaedt K."/>
            <person name="Henrissat B."/>
            <person name="Hofmann G."/>
            <person name="Homan T."/>
            <person name="Horio T."/>
            <person name="Horiuchi H."/>
            <person name="James S."/>
            <person name="Jones M."/>
            <person name="Karaffa L."/>
            <person name="Karanyi Z."/>
            <person name="Kato M."/>
            <person name="Keller N."/>
            <person name="Kelly D.E."/>
            <person name="Kiel J.A."/>
            <person name="Kim J.M."/>
            <person name="van der Klei I.J."/>
            <person name="Klis F.M."/>
            <person name="Kovalchuk A."/>
            <person name="Krasevec N."/>
            <person name="Kubicek C.P."/>
            <person name="Liu B."/>
            <person name="Maccabe A."/>
            <person name="Meyer V."/>
            <person name="Mirabito P."/>
            <person name="Miskei M."/>
            <person name="Mos M."/>
            <person name="Mullins J."/>
            <person name="Nelson D.R."/>
            <person name="Nielsen J."/>
            <person name="Oakley B.R."/>
            <person name="Osmani S.A."/>
            <person name="Pakula T."/>
            <person name="Paszewski A."/>
            <person name="Paulsen I."/>
            <person name="Pilsyk S."/>
            <person name="Pocsi I."/>
            <person name="Punt P.J."/>
            <person name="Ram A.F."/>
            <person name="Ren Q."/>
            <person name="Robellet X."/>
            <person name="Robson G."/>
            <person name="Seiboth B."/>
            <person name="van Solingen P."/>
            <person name="Specht T."/>
            <person name="Sun J."/>
            <person name="Taheri-Talesh N."/>
            <person name="Takeshita N."/>
            <person name="Ussery D."/>
            <person name="vanKuyk P.A."/>
            <person name="Visser H."/>
            <person name="van de Vondervoort P.J."/>
            <person name="de Vries R.P."/>
            <person name="Walton J."/>
            <person name="Xiang X."/>
            <person name="Xiong Y."/>
            <person name="Zeng A.P."/>
            <person name="Brandt B.W."/>
            <person name="Cornell M.J."/>
            <person name="van den Hondel C.A."/>
            <person name="Visser J."/>
            <person name="Oliver S.G."/>
            <person name="Turner G."/>
        </authorList>
    </citation>
    <scope>GENOME REANNOTATION</scope>
    <source>
        <strain>FGSC A4 / ATCC 38163 / CBS 112.46 / NRRL 194 / M139</strain>
    </source>
</reference>
<sequence>MKTTFLVSLATAALSSTAAAVSVSGSAEGFAKGVTGGGSATAVYPDTIDELVSYLGDDEARVIVLSKTFDFTDSEGTTTETGCAPWGTDAACQVAINQNDWCTNYQPDAPSVSVTYDNAGTLGITVNSDKTLIGEGSAGVIKGKGLRLVSGTSNVIIQNIAITDINPKYVWGGDAITLNDVDMVWIDHVTTARIARQHIVLGTEADNRVTISNSFINGESDYSATCDGYHYWGIYLDGSSDMVTMKGNYIYHTSGRSPKVQGNTLLHAVNNYWHDNSDHAFEIGEGAYVLAEGNVFQNIPTVAEDPIEGELFASPSESANEVCSTYLGRVCELNGFGSSGTFNQADTDFLSKFEGKNIASADSYSSVASSVASSAGNTL</sequence>
<dbReference type="EC" id="4.2.2.10"/>
<dbReference type="EMBL" id="DQ490478">
    <property type="protein sequence ID" value="ABF50854.1"/>
    <property type="molecule type" value="mRNA"/>
</dbReference>
<dbReference type="EMBL" id="AACD01000038">
    <property type="protein sequence ID" value="EAA64442.1"/>
    <property type="status" value="ALT_SEQ"/>
    <property type="molecule type" value="Genomic_DNA"/>
</dbReference>
<dbReference type="EMBL" id="BN001307">
    <property type="protein sequence ID" value="CBF86622.1"/>
    <property type="status" value="ALT_SEQ"/>
    <property type="molecule type" value="Genomic_DNA"/>
</dbReference>
<dbReference type="RefSeq" id="XP_659935.1">
    <property type="nucleotide sequence ID" value="XM_654843.1"/>
</dbReference>
<dbReference type="SMR" id="Q5BAU9"/>
<dbReference type="STRING" id="227321.Q5BAU9"/>
<dbReference type="CAZy" id="PL1">
    <property type="family name" value="Polysaccharide Lyase Family 1"/>
</dbReference>
<dbReference type="KEGG" id="ani:ANIA_02331"/>
<dbReference type="VEuPathDB" id="FungiDB:AN2331"/>
<dbReference type="eggNOG" id="ENOG502QXM6">
    <property type="taxonomic scope" value="Eukaryota"/>
</dbReference>
<dbReference type="HOGENOM" id="CLU_021980_0_1_1"/>
<dbReference type="InParanoid" id="Q5BAU9"/>
<dbReference type="OrthoDB" id="1637350at2759"/>
<dbReference type="Proteomes" id="UP000000560">
    <property type="component" value="Chromosome VII"/>
</dbReference>
<dbReference type="GO" id="GO:0005576">
    <property type="term" value="C:extracellular region"/>
    <property type="evidence" value="ECO:0007669"/>
    <property type="project" value="UniProtKB-SubCell"/>
</dbReference>
<dbReference type="GO" id="GO:0030570">
    <property type="term" value="F:pectate lyase activity"/>
    <property type="evidence" value="ECO:0007669"/>
    <property type="project" value="InterPro"/>
</dbReference>
<dbReference type="GO" id="GO:0047490">
    <property type="term" value="F:pectin lyase activity"/>
    <property type="evidence" value="ECO:0000314"/>
    <property type="project" value="UniProtKB"/>
</dbReference>
<dbReference type="GO" id="GO:0071555">
    <property type="term" value="P:cell wall organization"/>
    <property type="evidence" value="ECO:0007669"/>
    <property type="project" value="UniProtKB-KW"/>
</dbReference>
<dbReference type="GO" id="GO:0045490">
    <property type="term" value="P:pectin catabolic process"/>
    <property type="evidence" value="ECO:0000314"/>
    <property type="project" value="UniProtKB"/>
</dbReference>
<dbReference type="FunFam" id="2.160.20.10:FF:000003">
    <property type="entry name" value="Pectin lyase F"/>
    <property type="match status" value="1"/>
</dbReference>
<dbReference type="Gene3D" id="2.160.20.10">
    <property type="entry name" value="Single-stranded right-handed beta-helix, Pectin lyase-like"/>
    <property type="match status" value="1"/>
</dbReference>
<dbReference type="InterPro" id="IPR002022">
    <property type="entry name" value="Pec_lyase"/>
</dbReference>
<dbReference type="InterPro" id="IPR012334">
    <property type="entry name" value="Pectin_lyas_fold"/>
</dbReference>
<dbReference type="InterPro" id="IPR011050">
    <property type="entry name" value="Pectin_lyase_fold/virulence"/>
</dbReference>
<dbReference type="InterPro" id="IPR045032">
    <property type="entry name" value="PEL"/>
</dbReference>
<dbReference type="PANTHER" id="PTHR31683">
    <property type="entry name" value="PECTATE LYASE 18-RELATED"/>
    <property type="match status" value="1"/>
</dbReference>
<dbReference type="PANTHER" id="PTHR31683:SF16">
    <property type="entry name" value="PECTIN LYASE A-RELATED"/>
    <property type="match status" value="1"/>
</dbReference>
<dbReference type="Pfam" id="PF00544">
    <property type="entry name" value="Pectate_lyase_4"/>
    <property type="match status" value="1"/>
</dbReference>
<dbReference type="SMART" id="SM00656">
    <property type="entry name" value="Amb_all"/>
    <property type="match status" value="1"/>
</dbReference>
<dbReference type="SUPFAM" id="SSF51126">
    <property type="entry name" value="Pectin lyase-like"/>
    <property type="match status" value="1"/>
</dbReference>
<proteinExistence type="evidence at protein level"/>
<protein>
    <recommendedName>
        <fullName>Pectin lyase A</fullName>
        <shortName>PLA</shortName>
        <ecNumber>4.2.2.10</ecNumber>
    </recommendedName>
</protein>
<feature type="signal peptide" evidence="2">
    <location>
        <begin position="1"/>
        <end position="20"/>
    </location>
</feature>
<feature type="chain" id="PRO_0000394343" description="Pectin lyase A">
    <location>
        <begin position="21"/>
        <end position="379"/>
    </location>
</feature>
<feature type="active site" evidence="2">
    <location>
        <position position="256"/>
    </location>
</feature>
<feature type="disulfide bond" evidence="1">
    <location>
        <begin position="83"/>
        <end position="102"/>
    </location>
</feature>
<feature type="disulfide bond" evidence="1">
    <location>
        <begin position="92"/>
        <end position="226"/>
    </location>
</feature>
<feature type="disulfide bond" evidence="1">
    <location>
        <begin position="323"/>
        <end position="331"/>
    </location>
</feature>
<organism>
    <name type="scientific">Emericella nidulans (strain FGSC A4 / ATCC 38163 / CBS 112.46 / NRRL 194 / M139)</name>
    <name type="common">Aspergillus nidulans</name>
    <dbReference type="NCBI Taxonomy" id="227321"/>
    <lineage>
        <taxon>Eukaryota</taxon>
        <taxon>Fungi</taxon>
        <taxon>Dikarya</taxon>
        <taxon>Ascomycota</taxon>
        <taxon>Pezizomycotina</taxon>
        <taxon>Eurotiomycetes</taxon>
        <taxon>Eurotiomycetidae</taxon>
        <taxon>Eurotiales</taxon>
        <taxon>Aspergillaceae</taxon>
        <taxon>Aspergillus</taxon>
        <taxon>Aspergillus subgen. Nidulantes</taxon>
    </lineage>
</organism>
<name>PELA_EMENI</name>
<gene>
    <name type="primary">pelA</name>
    <name type="ORF">AN2331</name>
</gene>